<accession>Q57ET8</accession>
<sequence>MSHNSFGHLFRVTTWGESHGLALGCVVDGCPPGITFTEAEIQSFLDKRKPGQSKYTTQRREPDQVRVLSGVLLGEDGVTMTTTGTPISMMIENTDQRSKDYGEIARQYRPGHADYAYDVKYGIRDYRGGGRSSARETAARVAAGAIARKVVPGLEVRGALVSIGAHDIDRSRWNWAEVDNNPFFTPDAGSVEVFADYLDGIRKNGSSVGAIIEIVAEGVPAGIGAPIYGKLDQDIASYLMSINAVKGVEIGNGFEAARLTGEENADEMRMGNDGKPIFLSNHAGGVLGGIATGAPVVARFAVKPTSSILTPRRSIDKDGNEVDVMTRGRHDPCVGIRAVPIGEAMVACAIADHYLRHRGQTGRV</sequence>
<gene>
    <name evidence="1" type="primary">aroC</name>
    <name type="ordered locus">BruAb1_0450</name>
</gene>
<organism>
    <name type="scientific">Brucella abortus biovar 1 (strain 9-941)</name>
    <dbReference type="NCBI Taxonomy" id="262698"/>
    <lineage>
        <taxon>Bacteria</taxon>
        <taxon>Pseudomonadati</taxon>
        <taxon>Pseudomonadota</taxon>
        <taxon>Alphaproteobacteria</taxon>
        <taxon>Hyphomicrobiales</taxon>
        <taxon>Brucellaceae</taxon>
        <taxon>Brucella/Ochrobactrum group</taxon>
        <taxon>Brucella</taxon>
    </lineage>
</organism>
<reference key="1">
    <citation type="journal article" date="2005" name="J. Bacteriol.">
        <title>Completion of the genome sequence of Brucella abortus and comparison to the highly similar genomes of Brucella melitensis and Brucella suis.</title>
        <authorList>
            <person name="Halling S.M."/>
            <person name="Peterson-Burch B.D."/>
            <person name="Bricker B.J."/>
            <person name="Zuerner R.L."/>
            <person name="Qing Z."/>
            <person name="Li L.-L."/>
            <person name="Kapur V."/>
            <person name="Alt D.P."/>
            <person name="Olsen S.C."/>
        </authorList>
    </citation>
    <scope>NUCLEOTIDE SEQUENCE [LARGE SCALE GENOMIC DNA]</scope>
    <source>
        <strain>9-941</strain>
    </source>
</reference>
<keyword id="KW-0028">Amino-acid biosynthesis</keyword>
<keyword id="KW-0057">Aromatic amino acid biosynthesis</keyword>
<keyword id="KW-0274">FAD</keyword>
<keyword id="KW-0285">Flavoprotein</keyword>
<keyword id="KW-0288">FMN</keyword>
<keyword id="KW-0456">Lyase</keyword>
<keyword id="KW-0521">NADP</keyword>
<name>AROC_BRUAB</name>
<evidence type="ECO:0000255" key="1">
    <source>
        <dbReference type="HAMAP-Rule" id="MF_00300"/>
    </source>
</evidence>
<dbReference type="EC" id="4.2.3.5" evidence="1"/>
<dbReference type="EMBL" id="AE017223">
    <property type="protein sequence ID" value="AAX73846.1"/>
    <property type="molecule type" value="Genomic_DNA"/>
</dbReference>
<dbReference type="RefSeq" id="WP_002963585.1">
    <property type="nucleotide sequence ID" value="NC_006932.1"/>
</dbReference>
<dbReference type="SMR" id="Q57ET8"/>
<dbReference type="EnsemblBacteria" id="AAX73846">
    <property type="protein sequence ID" value="AAX73846"/>
    <property type="gene ID" value="BruAb1_0450"/>
</dbReference>
<dbReference type="GeneID" id="97534201"/>
<dbReference type="KEGG" id="bmb:BruAb1_0450"/>
<dbReference type="HOGENOM" id="CLU_034547_0_0_5"/>
<dbReference type="UniPathway" id="UPA00053">
    <property type="reaction ID" value="UER00090"/>
</dbReference>
<dbReference type="PRO" id="PR:Q57ET8"/>
<dbReference type="Proteomes" id="UP000000540">
    <property type="component" value="Chromosome I"/>
</dbReference>
<dbReference type="GO" id="GO:0005829">
    <property type="term" value="C:cytosol"/>
    <property type="evidence" value="ECO:0007669"/>
    <property type="project" value="TreeGrafter"/>
</dbReference>
<dbReference type="GO" id="GO:0004107">
    <property type="term" value="F:chorismate synthase activity"/>
    <property type="evidence" value="ECO:0007669"/>
    <property type="project" value="UniProtKB-UniRule"/>
</dbReference>
<dbReference type="GO" id="GO:0010181">
    <property type="term" value="F:FMN binding"/>
    <property type="evidence" value="ECO:0007669"/>
    <property type="project" value="TreeGrafter"/>
</dbReference>
<dbReference type="GO" id="GO:0008652">
    <property type="term" value="P:amino acid biosynthetic process"/>
    <property type="evidence" value="ECO:0007669"/>
    <property type="project" value="UniProtKB-KW"/>
</dbReference>
<dbReference type="GO" id="GO:0009073">
    <property type="term" value="P:aromatic amino acid family biosynthetic process"/>
    <property type="evidence" value="ECO:0007669"/>
    <property type="project" value="UniProtKB-KW"/>
</dbReference>
<dbReference type="GO" id="GO:0009423">
    <property type="term" value="P:chorismate biosynthetic process"/>
    <property type="evidence" value="ECO:0007669"/>
    <property type="project" value="UniProtKB-UniRule"/>
</dbReference>
<dbReference type="CDD" id="cd07304">
    <property type="entry name" value="Chorismate_synthase"/>
    <property type="match status" value="1"/>
</dbReference>
<dbReference type="Gene3D" id="3.60.150.10">
    <property type="entry name" value="Chorismate synthase AroC"/>
    <property type="match status" value="1"/>
</dbReference>
<dbReference type="HAMAP" id="MF_00300">
    <property type="entry name" value="Chorismate_synth"/>
    <property type="match status" value="1"/>
</dbReference>
<dbReference type="InterPro" id="IPR000453">
    <property type="entry name" value="Chorismate_synth"/>
</dbReference>
<dbReference type="InterPro" id="IPR035904">
    <property type="entry name" value="Chorismate_synth_AroC_sf"/>
</dbReference>
<dbReference type="InterPro" id="IPR020541">
    <property type="entry name" value="Chorismate_synthase_CS"/>
</dbReference>
<dbReference type="NCBIfam" id="TIGR00033">
    <property type="entry name" value="aroC"/>
    <property type="match status" value="1"/>
</dbReference>
<dbReference type="NCBIfam" id="NF003793">
    <property type="entry name" value="PRK05382.1"/>
    <property type="match status" value="1"/>
</dbReference>
<dbReference type="PANTHER" id="PTHR21085">
    <property type="entry name" value="CHORISMATE SYNTHASE"/>
    <property type="match status" value="1"/>
</dbReference>
<dbReference type="PANTHER" id="PTHR21085:SF0">
    <property type="entry name" value="CHORISMATE SYNTHASE"/>
    <property type="match status" value="1"/>
</dbReference>
<dbReference type="Pfam" id="PF01264">
    <property type="entry name" value="Chorismate_synt"/>
    <property type="match status" value="1"/>
</dbReference>
<dbReference type="PIRSF" id="PIRSF001456">
    <property type="entry name" value="Chorismate_synth"/>
    <property type="match status" value="1"/>
</dbReference>
<dbReference type="SUPFAM" id="SSF103263">
    <property type="entry name" value="Chorismate synthase, AroC"/>
    <property type="match status" value="1"/>
</dbReference>
<dbReference type="PROSITE" id="PS00787">
    <property type="entry name" value="CHORISMATE_SYNTHASE_1"/>
    <property type="match status" value="1"/>
</dbReference>
<dbReference type="PROSITE" id="PS00788">
    <property type="entry name" value="CHORISMATE_SYNTHASE_2"/>
    <property type="match status" value="1"/>
</dbReference>
<dbReference type="PROSITE" id="PS00789">
    <property type="entry name" value="CHORISMATE_SYNTHASE_3"/>
    <property type="match status" value="1"/>
</dbReference>
<protein>
    <recommendedName>
        <fullName evidence="1">Chorismate synthase</fullName>
        <shortName evidence="1">CS</shortName>
        <ecNumber evidence="1">4.2.3.5</ecNumber>
    </recommendedName>
    <alternativeName>
        <fullName evidence="1">5-enolpyruvylshikimate-3-phosphate phospholyase</fullName>
    </alternativeName>
</protein>
<comment type="function">
    <text evidence="1">Catalyzes the anti-1,4-elimination of the C-3 phosphate and the C-6 proR hydrogen from 5-enolpyruvylshikimate-3-phosphate (EPSP) to yield chorismate, which is the branch point compound that serves as the starting substrate for the three terminal pathways of aromatic amino acid biosynthesis. This reaction introduces a second double bond into the aromatic ring system.</text>
</comment>
<comment type="catalytic activity">
    <reaction evidence="1">
        <text>5-O-(1-carboxyvinyl)-3-phosphoshikimate = chorismate + phosphate</text>
        <dbReference type="Rhea" id="RHEA:21020"/>
        <dbReference type="ChEBI" id="CHEBI:29748"/>
        <dbReference type="ChEBI" id="CHEBI:43474"/>
        <dbReference type="ChEBI" id="CHEBI:57701"/>
        <dbReference type="EC" id="4.2.3.5"/>
    </reaction>
</comment>
<comment type="cofactor">
    <cofactor evidence="1">
        <name>FMNH2</name>
        <dbReference type="ChEBI" id="CHEBI:57618"/>
    </cofactor>
    <text evidence="1">Reduced FMN (FMNH(2)).</text>
</comment>
<comment type="pathway">
    <text evidence="1">Metabolic intermediate biosynthesis; chorismate biosynthesis; chorismate from D-erythrose 4-phosphate and phosphoenolpyruvate: step 7/7.</text>
</comment>
<comment type="subunit">
    <text evidence="1">Homotetramer.</text>
</comment>
<comment type="similarity">
    <text evidence="1">Belongs to the chorismate synthase family.</text>
</comment>
<proteinExistence type="inferred from homology"/>
<feature type="chain" id="PRO_0000256276" description="Chorismate synthase">
    <location>
        <begin position="1"/>
        <end position="364"/>
    </location>
</feature>
<feature type="binding site" evidence="1">
    <location>
        <position position="48"/>
    </location>
    <ligand>
        <name>NADP(+)</name>
        <dbReference type="ChEBI" id="CHEBI:58349"/>
    </ligand>
</feature>
<feature type="binding site" evidence="1">
    <location>
        <begin position="131"/>
        <end position="133"/>
    </location>
    <ligand>
        <name>FMN</name>
        <dbReference type="ChEBI" id="CHEBI:58210"/>
    </ligand>
</feature>
<feature type="binding site" evidence="1">
    <location>
        <begin position="243"/>
        <end position="244"/>
    </location>
    <ligand>
        <name>FMN</name>
        <dbReference type="ChEBI" id="CHEBI:58210"/>
    </ligand>
</feature>
<feature type="binding site" evidence="1">
    <location>
        <position position="288"/>
    </location>
    <ligand>
        <name>FMN</name>
        <dbReference type="ChEBI" id="CHEBI:58210"/>
    </ligand>
</feature>
<feature type="binding site" evidence="1">
    <location>
        <begin position="303"/>
        <end position="307"/>
    </location>
    <ligand>
        <name>FMN</name>
        <dbReference type="ChEBI" id="CHEBI:58210"/>
    </ligand>
</feature>
<feature type="binding site" evidence="1">
    <location>
        <position position="329"/>
    </location>
    <ligand>
        <name>FMN</name>
        <dbReference type="ChEBI" id="CHEBI:58210"/>
    </ligand>
</feature>